<sequence length="1588" mass="174834">MVQLAKVPILGNDIIHVGYNIHDHLVETIIKHCPSSTYVICNDTNLSKVPYYQQLVLEFKASLPEGSRLLTYVVKPGETSKSRETKAQLEDYLLVEGCTRDTVMIAIGGGVIGDMIGFVASTFMRGVRVVQVPTSLLAMVDSSIGGKTAIDTPLGKNFIGAFWQPKFVLVDIKWLETLAKREFINGMAEVIKTACIWNADEFTRLESNASLFLNVVNGAKNVKVTNQLTNEIDEISNTDIEAMLDHTYKLVLESIKVKAEVVSSDERESSLRNLLNFGHSIGHAYEAILTPQALHGECVSIGMVKEAELSRYFGILSPTQVARLSKILVAYGLPVSPDEKWFKELTLHKKTPLDILLKKMSIDKKNEGSKKKVVILESIGKCYGDSAQFVSDEDLRFILTDETLVYPFKDIPADQQKVVIPPGSKSISNRALIIAALGEGQCKIKNLLHSDDTKHMLTAVHELKGATISWEDNGETVVVEGHGGSTLSACADPLYLGNAGTASRFLTSLAALVNSTPSQKYIVLTGNARMQQRPIAPLVDSLRANGTKIEYLNNEGSLPIKVYTDSVFKGGRIELAATVSSQYVSSILMCAPYAEEPVTLALVGGKPISKLYVDMTIKMMEKFGINVETSTTEPYTYYIPKGHYINPSEYVIESDASSATYPLAFAAMTGTTVTVPNIGFESLQGDARFARDVLKPMGCKITQTATSTTVSGPPVGTLKPLKHVDMEPMTDAFLTACVVAAISHDSDPNSANTTTIEGIANQRVKECNRILAMATELAKFGVKTTELPDGIQVHGLNSIKDLKVPSDSSGPVGVCTYDDHRVAMSFSLLAGMVNSQNERDEVANPVRILERHCTGKTWPGWWDVLHSELGAKLDGAEPLECTSKKNSKKSVVIIGMRAAGKTTISKWCASALGYKLVDLDELFEQQHNNQSVKQFVVENGWEKFREEETRIFKEVIQNYGDDGYVFSTGGGIVESAESRKALKDFASSGGYVLHLHRDIEETIVFLQSDPSRPAYVEEIREVWNRREEWYKECSNFSFFAPHCSAEAEFQALRRSFSKYIATITGVREIEIPSGRSAFVCLTFDDLTEQTENLTPICYGCEAVEVRVDHLANYSADFVSKQLSILRKATDSIPIIFTVRTKKQGGNFPDEEFKTLRELYDIALKNGVEFLDLELTLPTDIQYEVINKRGNTKIIGSHHDFQGLYSWDDAEWENRFNQALTLDVDVVKFVGTAVNFEDNLRLEHFRDTHKNKPLIAVNMTSKGSISRVLNNVLTPVTSDLLPNSAAPGQLTVAQINKMYTSMGGIEPKELFVVGKPIGHSRSPILHNTGYEILGLPHKFDKFETESAQLVKEKLLDGNKNFGGAAVTIPLKLDIMQYMDELTDAAKVIGAVNTVIPLGNKKFKGDNTDWLGIRNALINNGVPEYVGHTAGLVIGAGGTSRAALYALHSLGCKKIFIINRTTSKLKPLIESLPSEFNIIGIESTKSIEEIKEHVGVAVSCVPADKPLDDELLSKLERFLVKGAHAAFAPTLLEAAYKPSVTPVMTISQDKYQWHVVPGSQMLVHQGVAQFEKWTGFKAPFKAIFDAVTKE</sequence>
<keyword id="KW-0028">Amino-acid biosynthesis</keyword>
<keyword id="KW-0057">Aromatic amino acid biosynthesis</keyword>
<keyword id="KW-0067">ATP-binding</keyword>
<keyword id="KW-0963">Cytoplasm</keyword>
<keyword id="KW-0418">Kinase</keyword>
<keyword id="KW-0456">Lyase</keyword>
<keyword id="KW-0479">Metal-binding</keyword>
<keyword id="KW-0511">Multifunctional enzyme</keyword>
<keyword id="KW-0521">NADP</keyword>
<keyword id="KW-0547">Nucleotide-binding</keyword>
<keyword id="KW-0560">Oxidoreductase</keyword>
<keyword id="KW-0808">Transferase</keyword>
<keyword id="KW-0862">Zinc</keyword>
<proteinExistence type="inferred from homology"/>
<feature type="chain" id="PRO_0000406749" description="Pentafunctional AROM polypeptide">
    <location>
        <begin position="1"/>
        <end position="1588"/>
    </location>
</feature>
<feature type="region of interest" description="3-dehydroquinate synthase">
    <location>
        <begin position="1"/>
        <end position="392"/>
    </location>
</feature>
<feature type="region of interest" description="EPSP synthase">
    <location>
        <begin position="405"/>
        <end position="871"/>
    </location>
</feature>
<feature type="region of interest" description="Shikimate kinase">
    <location>
        <begin position="890"/>
        <end position="1080"/>
    </location>
</feature>
<feature type="region of interest" description="3-dehydroquinase">
    <location>
        <begin position="1081"/>
        <end position="1293"/>
    </location>
</feature>
<feature type="region of interest" description="Shikimate dehydrogenase">
    <location>
        <begin position="1306"/>
        <end position="1588"/>
    </location>
</feature>
<feature type="active site" description="Proton acceptor; for 3-dehydroquinate synthase activity" evidence="1">
    <location>
        <position position="268"/>
    </location>
</feature>
<feature type="active site" description="Proton acceptor; for 3-dehydroquinate synthase activity" evidence="1">
    <location>
        <position position="283"/>
    </location>
</feature>
<feature type="active site" description="For EPSP synthase activity" evidence="1">
    <location>
        <position position="853"/>
    </location>
</feature>
<feature type="active site" description="Proton acceptor; for 3-dehydroquinate dehydratase activity" evidence="1">
    <location>
        <position position="1198"/>
    </location>
</feature>
<feature type="active site" description="Schiff-base intermediate with substrate; for 3-dehydroquinate dehydratase activity" evidence="1">
    <location>
        <position position="1227"/>
    </location>
</feature>
<feature type="binding site" evidence="1">
    <location>
        <begin position="43"/>
        <end position="45"/>
    </location>
    <ligand>
        <name>NAD(+)</name>
        <dbReference type="ChEBI" id="CHEBI:57540"/>
    </ligand>
</feature>
<feature type="binding site" evidence="1">
    <location>
        <begin position="78"/>
        <end position="81"/>
    </location>
    <ligand>
        <name>NAD(+)</name>
        <dbReference type="ChEBI" id="CHEBI:57540"/>
    </ligand>
</feature>
<feature type="binding site" evidence="1">
    <location>
        <begin position="109"/>
        <end position="111"/>
    </location>
    <ligand>
        <name>NAD(+)</name>
        <dbReference type="ChEBI" id="CHEBI:57540"/>
    </ligand>
</feature>
<feature type="binding site" evidence="1">
    <location>
        <position position="114"/>
    </location>
    <ligand>
        <name>NAD(+)</name>
        <dbReference type="ChEBI" id="CHEBI:57540"/>
    </ligand>
</feature>
<feature type="binding site" evidence="1">
    <location>
        <position position="125"/>
    </location>
    <ligand>
        <name>7-phospho-2-dehydro-3-deoxy-D-arabino-heptonate</name>
        <dbReference type="ChEBI" id="CHEBI:58394"/>
    </ligand>
</feature>
<feature type="binding site" evidence="1">
    <location>
        <begin position="134"/>
        <end position="135"/>
    </location>
    <ligand>
        <name>NAD(+)</name>
        <dbReference type="ChEBI" id="CHEBI:57540"/>
    </ligand>
</feature>
<feature type="binding site" evidence="1">
    <location>
        <position position="141"/>
    </location>
    <ligand>
        <name>7-phospho-2-dehydro-3-deoxy-D-arabino-heptonate</name>
        <dbReference type="ChEBI" id="CHEBI:58394"/>
    </ligand>
</feature>
<feature type="binding site" evidence="1">
    <location>
        <position position="147"/>
    </location>
    <ligand>
        <name>7-phospho-2-dehydro-3-deoxy-D-arabino-heptonate</name>
        <dbReference type="ChEBI" id="CHEBI:58394"/>
    </ligand>
</feature>
<feature type="binding site" evidence="1">
    <location>
        <position position="156"/>
    </location>
    <ligand>
        <name>NAD(+)</name>
        <dbReference type="ChEBI" id="CHEBI:57540"/>
    </ligand>
</feature>
<feature type="binding site" evidence="1">
    <location>
        <position position="157"/>
    </location>
    <ligand>
        <name>7-phospho-2-dehydro-3-deoxy-D-arabino-heptonate</name>
        <dbReference type="ChEBI" id="CHEBI:58394"/>
    </ligand>
</feature>
<feature type="binding site" evidence="1">
    <location>
        <begin position="174"/>
        <end position="177"/>
    </location>
    <ligand>
        <name>NAD(+)</name>
        <dbReference type="ChEBI" id="CHEBI:57540"/>
    </ligand>
</feature>
<feature type="binding site" evidence="1">
    <location>
        <position position="185"/>
    </location>
    <ligand>
        <name>NAD(+)</name>
        <dbReference type="ChEBI" id="CHEBI:57540"/>
    </ligand>
</feature>
<feature type="binding site" evidence="1">
    <location>
        <begin position="189"/>
        <end position="192"/>
    </location>
    <ligand>
        <name>7-phospho-2-dehydro-3-deoxy-D-arabino-heptonate</name>
        <dbReference type="ChEBI" id="CHEBI:58394"/>
    </ligand>
</feature>
<feature type="binding site" evidence="1">
    <location>
        <position position="189"/>
    </location>
    <ligand>
        <name>Zn(2+)</name>
        <dbReference type="ChEBI" id="CHEBI:29105"/>
        <note>catalytic</note>
    </ligand>
</feature>
<feature type="binding site" evidence="1">
    <location>
        <position position="258"/>
    </location>
    <ligand>
        <name>7-phospho-2-dehydro-3-deoxy-D-arabino-heptonate</name>
        <dbReference type="ChEBI" id="CHEBI:58394"/>
    </ligand>
</feature>
<feature type="binding site" evidence="1">
    <location>
        <begin position="272"/>
        <end position="276"/>
    </location>
    <ligand>
        <name>7-phospho-2-dehydro-3-deoxy-D-arabino-heptonate</name>
        <dbReference type="ChEBI" id="CHEBI:58394"/>
    </ligand>
</feature>
<feature type="binding site" evidence="1">
    <location>
        <position position="279"/>
    </location>
    <ligand>
        <name>7-phospho-2-dehydro-3-deoxy-D-arabino-heptonate</name>
        <dbReference type="ChEBI" id="CHEBI:58394"/>
    </ligand>
</feature>
<feature type="binding site" evidence="1">
    <location>
        <position position="279"/>
    </location>
    <ligand>
        <name>Zn(2+)</name>
        <dbReference type="ChEBI" id="CHEBI:29105"/>
        <note>catalytic</note>
    </ligand>
</feature>
<feature type="binding site" evidence="1">
    <location>
        <position position="295"/>
    </location>
    <ligand>
        <name>7-phospho-2-dehydro-3-deoxy-D-arabino-heptonate</name>
        <dbReference type="ChEBI" id="CHEBI:58394"/>
    </ligand>
</feature>
<feature type="binding site" evidence="1">
    <location>
        <position position="295"/>
    </location>
    <ligand>
        <name>Zn(2+)</name>
        <dbReference type="ChEBI" id="CHEBI:29105"/>
        <note>catalytic</note>
    </ligand>
</feature>
<feature type="binding site" evidence="1">
    <location>
        <position position="364"/>
    </location>
    <ligand>
        <name>7-phospho-2-dehydro-3-deoxy-D-arabino-heptonate</name>
        <dbReference type="ChEBI" id="CHEBI:58394"/>
    </ligand>
</feature>
<feature type="binding site" evidence="1">
    <location>
        <begin position="895"/>
        <end position="902"/>
    </location>
    <ligand>
        <name>ATP</name>
        <dbReference type="ChEBI" id="CHEBI:30616"/>
    </ligand>
</feature>
<evidence type="ECO:0000255" key="1">
    <source>
        <dbReference type="HAMAP-Rule" id="MF_03143"/>
    </source>
</evidence>
<organism>
    <name type="scientific">Saccharomyces cerevisiae (strain JAY291)</name>
    <name type="common">Baker's yeast</name>
    <dbReference type="NCBI Taxonomy" id="574961"/>
    <lineage>
        <taxon>Eukaryota</taxon>
        <taxon>Fungi</taxon>
        <taxon>Dikarya</taxon>
        <taxon>Ascomycota</taxon>
        <taxon>Saccharomycotina</taxon>
        <taxon>Saccharomycetes</taxon>
        <taxon>Saccharomycetales</taxon>
        <taxon>Saccharomycetaceae</taxon>
        <taxon>Saccharomyces</taxon>
    </lineage>
</organism>
<accession>C7GIN5</accession>
<comment type="function">
    <text evidence="1">The AROM polypeptide catalyzes 5 consecutive enzymatic reactions in prechorismate polyaromatic amino acid biosynthesis.</text>
</comment>
<comment type="catalytic activity">
    <reaction evidence="1">
        <text>7-phospho-2-dehydro-3-deoxy-D-arabino-heptonate = 3-dehydroquinate + phosphate</text>
        <dbReference type="Rhea" id="RHEA:21968"/>
        <dbReference type="ChEBI" id="CHEBI:32364"/>
        <dbReference type="ChEBI" id="CHEBI:43474"/>
        <dbReference type="ChEBI" id="CHEBI:58394"/>
        <dbReference type="EC" id="4.2.3.4"/>
    </reaction>
</comment>
<comment type="catalytic activity">
    <reaction evidence="1">
        <text>3-dehydroquinate = 3-dehydroshikimate + H2O</text>
        <dbReference type="Rhea" id="RHEA:21096"/>
        <dbReference type="ChEBI" id="CHEBI:15377"/>
        <dbReference type="ChEBI" id="CHEBI:16630"/>
        <dbReference type="ChEBI" id="CHEBI:32364"/>
        <dbReference type="EC" id="4.2.1.10"/>
    </reaction>
</comment>
<comment type="catalytic activity">
    <reaction evidence="1">
        <text>shikimate + NADP(+) = 3-dehydroshikimate + NADPH + H(+)</text>
        <dbReference type="Rhea" id="RHEA:17737"/>
        <dbReference type="ChEBI" id="CHEBI:15378"/>
        <dbReference type="ChEBI" id="CHEBI:16630"/>
        <dbReference type="ChEBI" id="CHEBI:36208"/>
        <dbReference type="ChEBI" id="CHEBI:57783"/>
        <dbReference type="ChEBI" id="CHEBI:58349"/>
        <dbReference type="EC" id="1.1.1.25"/>
    </reaction>
</comment>
<comment type="catalytic activity">
    <reaction evidence="1">
        <text>shikimate + ATP = 3-phosphoshikimate + ADP + H(+)</text>
        <dbReference type="Rhea" id="RHEA:13121"/>
        <dbReference type="ChEBI" id="CHEBI:15378"/>
        <dbReference type="ChEBI" id="CHEBI:30616"/>
        <dbReference type="ChEBI" id="CHEBI:36208"/>
        <dbReference type="ChEBI" id="CHEBI:145989"/>
        <dbReference type="ChEBI" id="CHEBI:456216"/>
        <dbReference type="EC" id="2.7.1.71"/>
    </reaction>
</comment>
<comment type="catalytic activity">
    <reaction evidence="1">
        <text>3-phosphoshikimate + phosphoenolpyruvate = 5-O-(1-carboxyvinyl)-3-phosphoshikimate + phosphate</text>
        <dbReference type="Rhea" id="RHEA:21256"/>
        <dbReference type="ChEBI" id="CHEBI:43474"/>
        <dbReference type="ChEBI" id="CHEBI:57701"/>
        <dbReference type="ChEBI" id="CHEBI:58702"/>
        <dbReference type="ChEBI" id="CHEBI:145989"/>
        <dbReference type="EC" id="2.5.1.19"/>
    </reaction>
</comment>
<comment type="cofactor">
    <cofactor>
        <name>Zn(2+)</name>
        <dbReference type="ChEBI" id="CHEBI:29105"/>
    </cofactor>
    <text>Binds 2 Zn(2+) ions per subunit.</text>
</comment>
<comment type="pathway">
    <text evidence="1">Metabolic intermediate biosynthesis; chorismate biosynthesis; chorismate from D-erythrose 4-phosphate and phosphoenolpyruvate: step 2/7.</text>
</comment>
<comment type="pathway">
    <text evidence="1">Metabolic intermediate biosynthesis; chorismate biosynthesis; chorismate from D-erythrose 4-phosphate and phosphoenolpyruvate: step 3/7.</text>
</comment>
<comment type="pathway">
    <text evidence="1">Metabolic intermediate biosynthesis; chorismate biosynthesis; chorismate from D-erythrose 4-phosphate and phosphoenolpyruvate: step 4/7.</text>
</comment>
<comment type="pathway">
    <text evidence="1">Metabolic intermediate biosynthesis; chorismate biosynthesis; chorismate from D-erythrose 4-phosphate and phosphoenolpyruvate: step 5/7.</text>
</comment>
<comment type="pathway">
    <text evidence="1">Metabolic intermediate biosynthesis; chorismate biosynthesis; chorismate from D-erythrose 4-phosphate and phosphoenolpyruvate: step 6/7.</text>
</comment>
<comment type="subunit">
    <text evidence="1">Homodimer.</text>
</comment>
<comment type="subcellular location">
    <subcellularLocation>
        <location evidence="1">Cytoplasm</location>
    </subcellularLocation>
</comment>
<comment type="similarity">
    <text evidence="1">In the N-terminal section; belongs to the sugar phosphate cyclases superfamily. Dehydroquinate synthase family.</text>
</comment>
<comment type="similarity">
    <text evidence="1">In the 2nd section; belongs to the EPSP synthase family.</text>
</comment>
<comment type="similarity">
    <text evidence="1">In the 3rd section; belongs to the shikimate kinase family.</text>
</comment>
<comment type="similarity">
    <text evidence="1">In the 4th section; belongs to the type-I 3-dehydroquinase family.</text>
</comment>
<comment type="similarity">
    <text evidence="1">In the C-terminal section; belongs to the shikimate dehydrogenase family.</text>
</comment>
<dbReference type="EC" id="4.2.3.4" evidence="1"/>
<dbReference type="EC" id="2.5.1.19" evidence="1"/>
<dbReference type="EC" id="2.7.1.71" evidence="1"/>
<dbReference type="EC" id="4.2.1.10" evidence="1"/>
<dbReference type="EC" id="1.1.1.25" evidence="1"/>
<dbReference type="EMBL" id="ACFL01000002">
    <property type="protein sequence ID" value="EEU09331.1"/>
    <property type="molecule type" value="Genomic_DNA"/>
</dbReference>
<dbReference type="SMR" id="C7GIN5"/>
<dbReference type="OrthoDB" id="21150at4893"/>
<dbReference type="UniPathway" id="UPA00053">
    <property type="reaction ID" value="UER00085"/>
</dbReference>
<dbReference type="UniPathway" id="UPA00053">
    <property type="reaction ID" value="UER00086"/>
</dbReference>
<dbReference type="UniPathway" id="UPA00053">
    <property type="reaction ID" value="UER00087"/>
</dbReference>
<dbReference type="UniPathway" id="UPA00053">
    <property type="reaction ID" value="UER00088"/>
</dbReference>
<dbReference type="UniPathway" id="UPA00053">
    <property type="reaction ID" value="UER00089"/>
</dbReference>
<dbReference type="Proteomes" id="UP000008073">
    <property type="component" value="Unassembled WGS sequence"/>
</dbReference>
<dbReference type="GO" id="GO:0005737">
    <property type="term" value="C:cytoplasm"/>
    <property type="evidence" value="ECO:0007669"/>
    <property type="project" value="UniProtKB-SubCell"/>
</dbReference>
<dbReference type="GO" id="GO:0003855">
    <property type="term" value="F:3-dehydroquinate dehydratase activity"/>
    <property type="evidence" value="ECO:0007669"/>
    <property type="project" value="UniProtKB-UniRule"/>
</dbReference>
<dbReference type="GO" id="GO:0003856">
    <property type="term" value="F:3-dehydroquinate synthase activity"/>
    <property type="evidence" value="ECO:0007669"/>
    <property type="project" value="UniProtKB-UniRule"/>
</dbReference>
<dbReference type="GO" id="GO:0003866">
    <property type="term" value="F:3-phosphoshikimate 1-carboxyvinyltransferase activity"/>
    <property type="evidence" value="ECO:0007669"/>
    <property type="project" value="UniProtKB-UniRule"/>
</dbReference>
<dbReference type="GO" id="GO:0005524">
    <property type="term" value="F:ATP binding"/>
    <property type="evidence" value="ECO:0007669"/>
    <property type="project" value="UniProtKB-UniRule"/>
</dbReference>
<dbReference type="GO" id="GO:0046872">
    <property type="term" value="F:metal ion binding"/>
    <property type="evidence" value="ECO:0007669"/>
    <property type="project" value="UniProtKB-UniRule"/>
</dbReference>
<dbReference type="GO" id="GO:0004764">
    <property type="term" value="F:shikimate 3-dehydrogenase (NADP+) activity"/>
    <property type="evidence" value="ECO:0007669"/>
    <property type="project" value="UniProtKB-UniRule"/>
</dbReference>
<dbReference type="GO" id="GO:0004765">
    <property type="term" value="F:shikimate kinase activity"/>
    <property type="evidence" value="ECO:0007669"/>
    <property type="project" value="UniProtKB-UniRule"/>
</dbReference>
<dbReference type="GO" id="GO:0008652">
    <property type="term" value="P:amino acid biosynthetic process"/>
    <property type="evidence" value="ECO:0007669"/>
    <property type="project" value="UniProtKB-KW"/>
</dbReference>
<dbReference type="GO" id="GO:0009073">
    <property type="term" value="P:aromatic amino acid family biosynthetic process"/>
    <property type="evidence" value="ECO:0007669"/>
    <property type="project" value="UniProtKB-UniRule"/>
</dbReference>
<dbReference type="GO" id="GO:0009423">
    <property type="term" value="P:chorismate biosynthetic process"/>
    <property type="evidence" value="ECO:0007669"/>
    <property type="project" value="UniProtKB-UniRule"/>
</dbReference>
<dbReference type="CDD" id="cd00502">
    <property type="entry name" value="DHQase_I"/>
    <property type="match status" value="1"/>
</dbReference>
<dbReference type="CDD" id="cd08195">
    <property type="entry name" value="DHQS"/>
    <property type="match status" value="1"/>
</dbReference>
<dbReference type="CDD" id="cd01556">
    <property type="entry name" value="EPSP_synthase"/>
    <property type="match status" value="1"/>
</dbReference>
<dbReference type="CDD" id="cd01065">
    <property type="entry name" value="NAD_bind_Shikimate_DH"/>
    <property type="match status" value="1"/>
</dbReference>
<dbReference type="CDD" id="cd00464">
    <property type="entry name" value="SK"/>
    <property type="match status" value="1"/>
</dbReference>
<dbReference type="FunFam" id="1.20.1090.10:FF:000007">
    <property type="entry name" value="Pentafunctional AROM polypeptide"/>
    <property type="match status" value="1"/>
</dbReference>
<dbReference type="FunFam" id="3.20.20.70:FF:000135">
    <property type="entry name" value="Pentafunctional AROM polypeptide"/>
    <property type="match status" value="1"/>
</dbReference>
<dbReference type="FunFam" id="3.40.50.10860:FF:000015">
    <property type="entry name" value="Pentafunctional AROM polypeptide"/>
    <property type="match status" value="1"/>
</dbReference>
<dbReference type="FunFam" id="3.40.50.1970:FF:000007">
    <property type="entry name" value="Pentafunctional AROM polypeptide"/>
    <property type="match status" value="1"/>
</dbReference>
<dbReference type="FunFam" id="3.40.50.300:FF:001256">
    <property type="entry name" value="Pentafunctional AROM polypeptide"/>
    <property type="match status" value="1"/>
</dbReference>
<dbReference type="FunFam" id="3.40.50.720:FF:000484">
    <property type="entry name" value="Pentafunctional AROM polypeptide"/>
    <property type="match status" value="1"/>
</dbReference>
<dbReference type="FunFam" id="3.65.10.10:FF:000007">
    <property type="entry name" value="Pentafunctional AROM polypeptide"/>
    <property type="match status" value="1"/>
</dbReference>
<dbReference type="FunFam" id="3.65.10.10:FF:000008">
    <property type="entry name" value="Pentafunctional AROM polypeptide"/>
    <property type="match status" value="1"/>
</dbReference>
<dbReference type="Gene3D" id="3.40.50.1970">
    <property type="match status" value="1"/>
</dbReference>
<dbReference type="Gene3D" id="3.20.20.70">
    <property type="entry name" value="Aldolase class I"/>
    <property type="match status" value="1"/>
</dbReference>
<dbReference type="Gene3D" id="1.20.1090.10">
    <property type="entry name" value="Dehydroquinate synthase-like - alpha domain"/>
    <property type="match status" value="1"/>
</dbReference>
<dbReference type="Gene3D" id="3.65.10.10">
    <property type="entry name" value="Enolpyruvate transferase domain"/>
    <property type="match status" value="2"/>
</dbReference>
<dbReference type="Gene3D" id="3.40.50.10860">
    <property type="entry name" value="Leucine Dehydrogenase, chain A, domain 1"/>
    <property type="match status" value="1"/>
</dbReference>
<dbReference type="Gene3D" id="3.40.50.720">
    <property type="entry name" value="NAD(P)-binding Rossmann-like Domain"/>
    <property type="match status" value="1"/>
</dbReference>
<dbReference type="Gene3D" id="3.40.50.300">
    <property type="entry name" value="P-loop containing nucleotide triphosphate hydrolases"/>
    <property type="match status" value="1"/>
</dbReference>
<dbReference type="HAMAP" id="MF_00210">
    <property type="entry name" value="EPSP_synth"/>
    <property type="match status" value="1"/>
</dbReference>
<dbReference type="HAMAP" id="MF_03143">
    <property type="entry name" value="Pentafunct_AroM"/>
    <property type="match status" value="1"/>
</dbReference>
<dbReference type="HAMAP" id="MF_00109">
    <property type="entry name" value="Shikimate_kinase"/>
    <property type="match status" value="1"/>
</dbReference>
<dbReference type="InterPro" id="IPR018508">
    <property type="entry name" value="3-dehydroquinate_DH_AS"/>
</dbReference>
<dbReference type="InterPro" id="IPR013785">
    <property type="entry name" value="Aldolase_TIM"/>
</dbReference>
<dbReference type="InterPro" id="IPR046346">
    <property type="entry name" value="Aminoacid_DH-like_N_sf"/>
</dbReference>
<dbReference type="InterPro" id="IPR016037">
    <property type="entry name" value="DHQ_synth_AroB"/>
</dbReference>
<dbReference type="InterPro" id="IPR030960">
    <property type="entry name" value="DHQS/DOIS_N"/>
</dbReference>
<dbReference type="InterPro" id="IPR056179">
    <property type="entry name" value="DHQS_C"/>
</dbReference>
<dbReference type="InterPro" id="IPR001381">
    <property type="entry name" value="DHquinase_I"/>
</dbReference>
<dbReference type="InterPro" id="IPR001986">
    <property type="entry name" value="Enolpyruvate_Tfrase_dom"/>
</dbReference>
<dbReference type="InterPro" id="IPR036968">
    <property type="entry name" value="Enolpyruvate_Tfrase_sf"/>
</dbReference>
<dbReference type="InterPro" id="IPR006264">
    <property type="entry name" value="EPSP_synthase"/>
</dbReference>
<dbReference type="InterPro" id="IPR023193">
    <property type="entry name" value="EPSP_synthase_CS"/>
</dbReference>
<dbReference type="InterPro" id="IPR036291">
    <property type="entry name" value="NAD(P)-bd_dom_sf"/>
</dbReference>
<dbReference type="InterPro" id="IPR027417">
    <property type="entry name" value="P-loop_NTPase"/>
</dbReference>
<dbReference type="InterPro" id="IPR008289">
    <property type="entry name" value="Pentafunct_AroM"/>
</dbReference>
<dbReference type="InterPro" id="IPR013792">
    <property type="entry name" value="RNA3'P_cycl/enolpyr_Trfase_a/b"/>
</dbReference>
<dbReference type="InterPro" id="IPR041121">
    <property type="entry name" value="SDH_C"/>
</dbReference>
<dbReference type="InterPro" id="IPR031322">
    <property type="entry name" value="Shikimate/glucono_kinase"/>
</dbReference>
<dbReference type="InterPro" id="IPR013708">
    <property type="entry name" value="Shikimate_DH-bd_N"/>
</dbReference>
<dbReference type="InterPro" id="IPR010110">
    <property type="entry name" value="Shikimate_DH_AroM-type"/>
</dbReference>
<dbReference type="InterPro" id="IPR000623">
    <property type="entry name" value="Shikimate_kinase/TSH1"/>
</dbReference>
<dbReference type="InterPro" id="IPR023000">
    <property type="entry name" value="Shikimate_kinase_CS"/>
</dbReference>
<dbReference type="InterPro" id="IPR006151">
    <property type="entry name" value="Shikm_DH/Glu-tRNA_Rdtase"/>
</dbReference>
<dbReference type="NCBIfam" id="TIGR01356">
    <property type="entry name" value="aroA"/>
    <property type="match status" value="1"/>
</dbReference>
<dbReference type="NCBIfam" id="TIGR01357">
    <property type="entry name" value="aroB"/>
    <property type="match status" value="1"/>
</dbReference>
<dbReference type="NCBIfam" id="TIGR01093">
    <property type="entry name" value="aroD"/>
    <property type="match status" value="1"/>
</dbReference>
<dbReference type="NCBIfam" id="TIGR01809">
    <property type="entry name" value="Shik-DH-AROM"/>
    <property type="match status" value="1"/>
</dbReference>
<dbReference type="PANTHER" id="PTHR21090">
    <property type="entry name" value="AROM/DEHYDROQUINATE SYNTHASE"/>
    <property type="match status" value="1"/>
</dbReference>
<dbReference type="PANTHER" id="PTHR21090:SF5">
    <property type="entry name" value="PENTAFUNCTIONAL AROM POLYPEPTIDE"/>
    <property type="match status" value="1"/>
</dbReference>
<dbReference type="Pfam" id="PF01761">
    <property type="entry name" value="DHQ_synthase"/>
    <property type="match status" value="1"/>
</dbReference>
<dbReference type="Pfam" id="PF24621">
    <property type="entry name" value="DHQS_C"/>
    <property type="match status" value="1"/>
</dbReference>
<dbReference type="Pfam" id="PF01487">
    <property type="entry name" value="DHquinase_I"/>
    <property type="match status" value="1"/>
</dbReference>
<dbReference type="Pfam" id="PF00275">
    <property type="entry name" value="EPSP_synthase"/>
    <property type="match status" value="1"/>
</dbReference>
<dbReference type="Pfam" id="PF18317">
    <property type="entry name" value="SDH_C"/>
    <property type="match status" value="1"/>
</dbReference>
<dbReference type="Pfam" id="PF01488">
    <property type="entry name" value="Shikimate_DH"/>
    <property type="match status" value="1"/>
</dbReference>
<dbReference type="Pfam" id="PF08501">
    <property type="entry name" value="Shikimate_dh_N"/>
    <property type="match status" value="1"/>
</dbReference>
<dbReference type="Pfam" id="PF01202">
    <property type="entry name" value="SKI"/>
    <property type="match status" value="1"/>
</dbReference>
<dbReference type="PIRSF" id="PIRSF000514">
    <property type="entry name" value="Pentafunct_AroM"/>
    <property type="match status" value="1"/>
</dbReference>
<dbReference type="PRINTS" id="PR01100">
    <property type="entry name" value="SHIKIMTKNASE"/>
</dbReference>
<dbReference type="SUPFAM" id="SSF51569">
    <property type="entry name" value="Aldolase"/>
    <property type="match status" value="1"/>
</dbReference>
<dbReference type="SUPFAM" id="SSF53223">
    <property type="entry name" value="Aminoacid dehydrogenase-like, N-terminal domain"/>
    <property type="match status" value="1"/>
</dbReference>
<dbReference type="SUPFAM" id="SSF56796">
    <property type="entry name" value="Dehydroquinate synthase-like"/>
    <property type="match status" value="1"/>
</dbReference>
<dbReference type="SUPFAM" id="SSF55205">
    <property type="entry name" value="EPT/RTPC-like"/>
    <property type="match status" value="1"/>
</dbReference>
<dbReference type="SUPFAM" id="SSF51735">
    <property type="entry name" value="NAD(P)-binding Rossmann-fold domains"/>
    <property type="match status" value="1"/>
</dbReference>
<dbReference type="SUPFAM" id="SSF52540">
    <property type="entry name" value="P-loop containing nucleoside triphosphate hydrolases"/>
    <property type="match status" value="1"/>
</dbReference>
<dbReference type="PROSITE" id="PS01028">
    <property type="entry name" value="DEHYDROQUINASE_I"/>
    <property type="match status" value="1"/>
</dbReference>
<dbReference type="PROSITE" id="PS00104">
    <property type="entry name" value="EPSP_SYNTHASE_1"/>
    <property type="match status" value="1"/>
</dbReference>
<dbReference type="PROSITE" id="PS00885">
    <property type="entry name" value="EPSP_SYNTHASE_2"/>
    <property type="match status" value="1"/>
</dbReference>
<dbReference type="PROSITE" id="PS01128">
    <property type="entry name" value="SHIKIMATE_KINASE"/>
    <property type="match status" value="1"/>
</dbReference>
<name>ARO1_YEAS2</name>
<protein>
    <recommendedName>
        <fullName evidence="1">Pentafunctional AROM polypeptide</fullName>
    </recommendedName>
    <domain>
        <recommendedName>
            <fullName evidence="1">3-dehydroquinate synthase</fullName>
            <shortName evidence="1">DHQS</shortName>
            <ecNumber evidence="1">4.2.3.4</ecNumber>
        </recommendedName>
    </domain>
    <domain>
        <recommendedName>
            <fullName evidence="1">3-phosphoshikimate 1-carboxyvinyltransferase</fullName>
            <ecNumber evidence="1">2.5.1.19</ecNumber>
        </recommendedName>
        <alternativeName>
            <fullName evidence="1">5-enolpyruvylshikimate-3-phosphate synthase</fullName>
            <shortName evidence="1">EPSP synthase</shortName>
            <shortName evidence="1">EPSPS</shortName>
        </alternativeName>
    </domain>
    <domain>
        <recommendedName>
            <fullName evidence="1">Shikimate kinase</fullName>
            <shortName evidence="1">SK</shortName>
            <ecNumber evidence="1">2.7.1.71</ecNumber>
        </recommendedName>
    </domain>
    <domain>
        <recommendedName>
            <fullName evidence="1">3-dehydroquinate dehydratase</fullName>
            <shortName evidence="1">3-dehydroquinase</shortName>
            <ecNumber evidence="1">4.2.1.10</ecNumber>
        </recommendedName>
    </domain>
    <domain>
        <recommendedName>
            <fullName evidence="1">Shikimate dehydrogenase</fullName>
            <ecNumber evidence="1">1.1.1.25</ecNumber>
        </recommendedName>
    </domain>
</protein>
<reference key="1">
    <citation type="journal article" date="2009" name="Genome Res.">
        <title>Genome structure of a Saccharomyces cerevisiae strain widely used in bioethanol production.</title>
        <authorList>
            <person name="Argueso J.L."/>
            <person name="Carazzolle M.F."/>
            <person name="Mieczkowski P.A."/>
            <person name="Duarte F.M."/>
            <person name="Netto O.V.C."/>
            <person name="Missawa S.K."/>
            <person name="Galzerani F."/>
            <person name="Costa G.G.L."/>
            <person name="Vidal R.O."/>
            <person name="Noronha M.F."/>
            <person name="Dominska M."/>
            <person name="Andrietta M.G.S."/>
            <person name="Andrietta S.R."/>
            <person name="Cunha A.F."/>
            <person name="Gomes L.H."/>
            <person name="Tavares F.C.A."/>
            <person name="Alcarde A.R."/>
            <person name="Dietrich F.S."/>
            <person name="McCusker J.H."/>
            <person name="Petes T.D."/>
            <person name="Pereira G.A.G."/>
        </authorList>
    </citation>
    <scope>NUCLEOTIDE SEQUENCE [LARGE SCALE GENOMIC DNA]</scope>
    <source>
        <strain>JAY291</strain>
    </source>
</reference>
<gene>
    <name evidence="1" type="primary">ARO1</name>
    <name type="ORF">C1Q_00021</name>
</gene>